<comment type="function">
    <text evidence="1">Catalyzes the folate-dependent formation of 5-methyl-uridine at position 54 (M-5-U54) in all tRNAs.</text>
</comment>
<comment type="catalytic activity">
    <reaction evidence="1">
        <text>uridine(54) in tRNA + (6R)-5,10-methylene-5,6,7,8-tetrahydrofolate + NADH + H(+) = 5-methyluridine(54) in tRNA + (6S)-5,6,7,8-tetrahydrofolate + NAD(+)</text>
        <dbReference type="Rhea" id="RHEA:16873"/>
        <dbReference type="Rhea" id="RHEA-COMP:10167"/>
        <dbReference type="Rhea" id="RHEA-COMP:10193"/>
        <dbReference type="ChEBI" id="CHEBI:15378"/>
        <dbReference type="ChEBI" id="CHEBI:15636"/>
        <dbReference type="ChEBI" id="CHEBI:57453"/>
        <dbReference type="ChEBI" id="CHEBI:57540"/>
        <dbReference type="ChEBI" id="CHEBI:57945"/>
        <dbReference type="ChEBI" id="CHEBI:65315"/>
        <dbReference type="ChEBI" id="CHEBI:74447"/>
        <dbReference type="EC" id="2.1.1.74"/>
    </reaction>
</comment>
<comment type="catalytic activity">
    <reaction evidence="1">
        <text>uridine(54) in tRNA + (6R)-5,10-methylene-5,6,7,8-tetrahydrofolate + NADPH + H(+) = 5-methyluridine(54) in tRNA + (6S)-5,6,7,8-tetrahydrofolate + NADP(+)</text>
        <dbReference type="Rhea" id="RHEA:62372"/>
        <dbReference type="Rhea" id="RHEA-COMP:10167"/>
        <dbReference type="Rhea" id="RHEA-COMP:10193"/>
        <dbReference type="ChEBI" id="CHEBI:15378"/>
        <dbReference type="ChEBI" id="CHEBI:15636"/>
        <dbReference type="ChEBI" id="CHEBI:57453"/>
        <dbReference type="ChEBI" id="CHEBI:57783"/>
        <dbReference type="ChEBI" id="CHEBI:58349"/>
        <dbReference type="ChEBI" id="CHEBI:65315"/>
        <dbReference type="ChEBI" id="CHEBI:74447"/>
        <dbReference type="EC" id="2.1.1.74"/>
    </reaction>
</comment>
<comment type="cofactor">
    <cofactor evidence="1">
        <name>FAD</name>
        <dbReference type="ChEBI" id="CHEBI:57692"/>
    </cofactor>
</comment>
<comment type="subcellular location">
    <subcellularLocation>
        <location evidence="1">Cytoplasm</location>
    </subcellularLocation>
</comment>
<comment type="similarity">
    <text evidence="1">Belongs to the MnmG family. TrmFO subfamily.</text>
</comment>
<keyword id="KW-0963">Cytoplasm</keyword>
<keyword id="KW-0274">FAD</keyword>
<keyword id="KW-0285">Flavoprotein</keyword>
<keyword id="KW-0489">Methyltransferase</keyword>
<keyword id="KW-0520">NAD</keyword>
<keyword id="KW-0521">NADP</keyword>
<keyword id="KW-0808">Transferase</keyword>
<keyword id="KW-0819">tRNA processing</keyword>
<gene>
    <name evidence="1" type="primary">trmFO</name>
    <name type="ordered locus">P9303_10021</name>
</gene>
<name>TRMFO_PROM3</name>
<accession>A2C8E1</accession>
<organism>
    <name type="scientific">Prochlorococcus marinus (strain MIT 9303)</name>
    <dbReference type="NCBI Taxonomy" id="59922"/>
    <lineage>
        <taxon>Bacteria</taxon>
        <taxon>Bacillati</taxon>
        <taxon>Cyanobacteriota</taxon>
        <taxon>Cyanophyceae</taxon>
        <taxon>Synechococcales</taxon>
        <taxon>Prochlorococcaceae</taxon>
        <taxon>Prochlorococcus</taxon>
    </lineage>
</organism>
<sequence length="467" mass="51532">MSSLPTVLVIGAGLAGSEAAWQIAQAGVPVRLIEMRPIKQSPAHYSSEFAELVCSNSFGALSSDRAAGLLKEELRRLGSIVIRTADSHAVPAGGALAVNRASFSASLTKELSAHPLITIERHEQEHLPGEGQITVLATGPLTSELLAENLRTFTGRSECHFFDAASPIIEGESIDLTLAFRASRYDKGDADYMNCPMDKGQYLAFREALLNAEQAELKEFDKESAKFFEGCLPIEELARRGEDTMRYGPLKPIGLWDPRWGDLNDRDVRRSKRAYAVVQLRKEDHEGRLWNLVGFQTNLKWSEQKRVLKMIPGLHQAEFVRFGVMHRNTFLEAPQLLEPTLQFSKRSNLLAAGQITGTEGYTAAVAGGWLAGSNAARLAMGLNTITLPSTTMIGALTHFVSDSDCFRDRKGEFQPMPANFGLLPELAERIHAKRERYGAYRDRALTMLEEAQQQWGMSKAPVQIGSS</sequence>
<protein>
    <recommendedName>
        <fullName evidence="1">Methylenetetrahydrofolate--tRNA-(uracil-5-)-methyltransferase TrmFO</fullName>
        <ecNumber evidence="1">2.1.1.74</ecNumber>
    </recommendedName>
    <alternativeName>
        <fullName evidence="1">Folate-dependent tRNA (uracil-5-)-methyltransferase</fullName>
    </alternativeName>
    <alternativeName>
        <fullName evidence="1">Folate-dependent tRNA(M-5-U54)-methyltransferase</fullName>
    </alternativeName>
</protein>
<reference key="1">
    <citation type="journal article" date="2007" name="PLoS Genet.">
        <title>Patterns and implications of gene gain and loss in the evolution of Prochlorococcus.</title>
        <authorList>
            <person name="Kettler G.C."/>
            <person name="Martiny A.C."/>
            <person name="Huang K."/>
            <person name="Zucker J."/>
            <person name="Coleman M.L."/>
            <person name="Rodrigue S."/>
            <person name="Chen F."/>
            <person name="Lapidus A."/>
            <person name="Ferriera S."/>
            <person name="Johnson J."/>
            <person name="Steglich C."/>
            <person name="Church G.M."/>
            <person name="Richardson P."/>
            <person name="Chisholm S.W."/>
        </authorList>
    </citation>
    <scope>NUCLEOTIDE SEQUENCE [LARGE SCALE GENOMIC DNA]</scope>
    <source>
        <strain>MIT 9303</strain>
    </source>
</reference>
<feature type="chain" id="PRO_0000346378" description="Methylenetetrahydrofolate--tRNA-(uracil-5-)-methyltransferase TrmFO">
    <location>
        <begin position="1"/>
        <end position="467"/>
    </location>
</feature>
<feature type="binding site" evidence="1">
    <location>
        <begin position="11"/>
        <end position="16"/>
    </location>
    <ligand>
        <name>FAD</name>
        <dbReference type="ChEBI" id="CHEBI:57692"/>
    </ligand>
</feature>
<dbReference type="EC" id="2.1.1.74" evidence="1"/>
<dbReference type="EMBL" id="CP000554">
    <property type="protein sequence ID" value="ABM77751.1"/>
    <property type="molecule type" value="Genomic_DNA"/>
</dbReference>
<dbReference type="RefSeq" id="WP_011825656.1">
    <property type="nucleotide sequence ID" value="NC_008820.1"/>
</dbReference>
<dbReference type="SMR" id="A2C8E1"/>
<dbReference type="STRING" id="59922.P9303_10021"/>
<dbReference type="KEGG" id="pmf:P9303_10021"/>
<dbReference type="HOGENOM" id="CLU_033057_1_0_3"/>
<dbReference type="BioCyc" id="PMAR59922:G1G80-906-MONOMER"/>
<dbReference type="Proteomes" id="UP000002274">
    <property type="component" value="Chromosome"/>
</dbReference>
<dbReference type="GO" id="GO:0005829">
    <property type="term" value="C:cytosol"/>
    <property type="evidence" value="ECO:0007669"/>
    <property type="project" value="TreeGrafter"/>
</dbReference>
<dbReference type="GO" id="GO:0050660">
    <property type="term" value="F:flavin adenine dinucleotide binding"/>
    <property type="evidence" value="ECO:0007669"/>
    <property type="project" value="UniProtKB-UniRule"/>
</dbReference>
<dbReference type="GO" id="GO:0047151">
    <property type="term" value="F:tRNA (uracil(54)-C5)-methyltransferase activity, 5,10-methylenetetrahydrofolate-dependent"/>
    <property type="evidence" value="ECO:0007669"/>
    <property type="project" value="UniProtKB-UniRule"/>
</dbReference>
<dbReference type="GO" id="GO:0030488">
    <property type="term" value="P:tRNA methylation"/>
    <property type="evidence" value="ECO:0007669"/>
    <property type="project" value="TreeGrafter"/>
</dbReference>
<dbReference type="GO" id="GO:0002098">
    <property type="term" value="P:tRNA wobble uridine modification"/>
    <property type="evidence" value="ECO:0007669"/>
    <property type="project" value="TreeGrafter"/>
</dbReference>
<dbReference type="Gene3D" id="3.50.50.60">
    <property type="entry name" value="FAD/NAD(P)-binding domain"/>
    <property type="match status" value="2"/>
</dbReference>
<dbReference type="HAMAP" id="MF_01037">
    <property type="entry name" value="TrmFO"/>
    <property type="match status" value="1"/>
</dbReference>
<dbReference type="InterPro" id="IPR036188">
    <property type="entry name" value="FAD/NAD-bd_sf"/>
</dbReference>
<dbReference type="InterPro" id="IPR002218">
    <property type="entry name" value="MnmG-rel"/>
</dbReference>
<dbReference type="InterPro" id="IPR040131">
    <property type="entry name" value="MnmG_N"/>
</dbReference>
<dbReference type="InterPro" id="IPR004417">
    <property type="entry name" value="TrmFO"/>
</dbReference>
<dbReference type="NCBIfam" id="TIGR00137">
    <property type="entry name" value="gid_trmFO"/>
    <property type="match status" value="1"/>
</dbReference>
<dbReference type="NCBIfam" id="NF003739">
    <property type="entry name" value="PRK05335.1"/>
    <property type="match status" value="1"/>
</dbReference>
<dbReference type="PANTHER" id="PTHR11806">
    <property type="entry name" value="GLUCOSE INHIBITED DIVISION PROTEIN A"/>
    <property type="match status" value="1"/>
</dbReference>
<dbReference type="PANTHER" id="PTHR11806:SF2">
    <property type="entry name" value="METHYLENETETRAHYDROFOLATE--TRNA-(URACIL-5-)-METHYLTRANSFERASE TRMFO"/>
    <property type="match status" value="1"/>
</dbReference>
<dbReference type="Pfam" id="PF01134">
    <property type="entry name" value="GIDA"/>
    <property type="match status" value="1"/>
</dbReference>
<dbReference type="PRINTS" id="PR00411">
    <property type="entry name" value="PNDRDTASEI"/>
</dbReference>
<dbReference type="SUPFAM" id="SSF51905">
    <property type="entry name" value="FAD/NAD(P)-binding domain"/>
    <property type="match status" value="1"/>
</dbReference>
<evidence type="ECO:0000255" key="1">
    <source>
        <dbReference type="HAMAP-Rule" id="MF_01037"/>
    </source>
</evidence>
<proteinExistence type="inferred from homology"/>